<accession>Q5E407</accession>
<organism>
    <name type="scientific">Aliivibrio fischeri (strain ATCC 700601 / ES114)</name>
    <name type="common">Vibrio fischeri</name>
    <dbReference type="NCBI Taxonomy" id="312309"/>
    <lineage>
        <taxon>Bacteria</taxon>
        <taxon>Pseudomonadati</taxon>
        <taxon>Pseudomonadota</taxon>
        <taxon>Gammaproteobacteria</taxon>
        <taxon>Vibrionales</taxon>
        <taxon>Vibrionaceae</taxon>
        <taxon>Aliivibrio</taxon>
    </lineage>
</organism>
<dbReference type="EMBL" id="CP000020">
    <property type="protein sequence ID" value="AAW86239.1"/>
    <property type="molecule type" value="Genomic_DNA"/>
</dbReference>
<dbReference type="RefSeq" id="WP_005420138.1">
    <property type="nucleotide sequence ID" value="NZ_CAWLES010000001.1"/>
</dbReference>
<dbReference type="RefSeq" id="YP_205127.1">
    <property type="nucleotide sequence ID" value="NC_006840.2"/>
</dbReference>
<dbReference type="SMR" id="Q5E407"/>
<dbReference type="STRING" id="312309.VF_1744"/>
<dbReference type="EnsemblBacteria" id="AAW86239">
    <property type="protein sequence ID" value="AAW86239"/>
    <property type="gene ID" value="VF_1744"/>
</dbReference>
<dbReference type="GeneID" id="54164443"/>
<dbReference type="KEGG" id="vfi:VF_1744"/>
<dbReference type="PATRIC" id="fig|312309.11.peg.1770"/>
<dbReference type="eggNOG" id="COG0333">
    <property type="taxonomic scope" value="Bacteria"/>
</dbReference>
<dbReference type="HOGENOM" id="CLU_129084_2_1_6"/>
<dbReference type="OrthoDB" id="9801927at2"/>
<dbReference type="Proteomes" id="UP000000537">
    <property type="component" value="Chromosome I"/>
</dbReference>
<dbReference type="GO" id="GO:0015934">
    <property type="term" value="C:large ribosomal subunit"/>
    <property type="evidence" value="ECO:0007669"/>
    <property type="project" value="InterPro"/>
</dbReference>
<dbReference type="GO" id="GO:0003735">
    <property type="term" value="F:structural constituent of ribosome"/>
    <property type="evidence" value="ECO:0007669"/>
    <property type="project" value="InterPro"/>
</dbReference>
<dbReference type="GO" id="GO:0006412">
    <property type="term" value="P:translation"/>
    <property type="evidence" value="ECO:0007669"/>
    <property type="project" value="UniProtKB-UniRule"/>
</dbReference>
<dbReference type="HAMAP" id="MF_00340">
    <property type="entry name" value="Ribosomal_bL32"/>
    <property type="match status" value="1"/>
</dbReference>
<dbReference type="InterPro" id="IPR002677">
    <property type="entry name" value="Ribosomal_bL32"/>
</dbReference>
<dbReference type="InterPro" id="IPR044957">
    <property type="entry name" value="Ribosomal_bL32_bact"/>
</dbReference>
<dbReference type="InterPro" id="IPR011332">
    <property type="entry name" value="Ribosomal_zn-bd"/>
</dbReference>
<dbReference type="NCBIfam" id="TIGR01031">
    <property type="entry name" value="rpmF_bact"/>
    <property type="match status" value="1"/>
</dbReference>
<dbReference type="PANTHER" id="PTHR35534">
    <property type="entry name" value="50S RIBOSOMAL PROTEIN L32"/>
    <property type="match status" value="1"/>
</dbReference>
<dbReference type="PANTHER" id="PTHR35534:SF1">
    <property type="entry name" value="LARGE RIBOSOMAL SUBUNIT PROTEIN BL32"/>
    <property type="match status" value="1"/>
</dbReference>
<dbReference type="Pfam" id="PF01783">
    <property type="entry name" value="Ribosomal_L32p"/>
    <property type="match status" value="1"/>
</dbReference>
<dbReference type="SUPFAM" id="SSF57829">
    <property type="entry name" value="Zn-binding ribosomal proteins"/>
    <property type="match status" value="1"/>
</dbReference>
<reference key="1">
    <citation type="journal article" date="2005" name="Proc. Natl. Acad. Sci. U.S.A.">
        <title>Complete genome sequence of Vibrio fischeri: a symbiotic bacterium with pathogenic congeners.</title>
        <authorList>
            <person name="Ruby E.G."/>
            <person name="Urbanowski M."/>
            <person name="Campbell J."/>
            <person name="Dunn A."/>
            <person name="Faini M."/>
            <person name="Gunsalus R."/>
            <person name="Lostroh P."/>
            <person name="Lupp C."/>
            <person name="McCann J."/>
            <person name="Millikan D."/>
            <person name="Schaefer A."/>
            <person name="Stabb E."/>
            <person name="Stevens A."/>
            <person name="Visick K."/>
            <person name="Whistler C."/>
            <person name="Greenberg E.P."/>
        </authorList>
    </citation>
    <scope>NUCLEOTIDE SEQUENCE [LARGE SCALE GENOMIC DNA]</scope>
    <source>
        <strain>ATCC 700601 / ES114</strain>
    </source>
</reference>
<comment type="similarity">
    <text evidence="1">Belongs to the bacterial ribosomal protein bL32 family.</text>
</comment>
<protein>
    <recommendedName>
        <fullName evidence="1">Large ribosomal subunit protein bL32</fullName>
    </recommendedName>
    <alternativeName>
        <fullName evidence="3">50S ribosomal protein L32</fullName>
    </alternativeName>
</protein>
<name>RL32_ALIF1</name>
<sequence>MAVQKSKKSRSMRGMRRSHDALTTSAVSVDATSGETHLRHNVTADGYYRGRKVINK</sequence>
<keyword id="KW-1185">Reference proteome</keyword>
<keyword id="KW-0687">Ribonucleoprotein</keyword>
<keyword id="KW-0689">Ribosomal protein</keyword>
<gene>
    <name evidence="1" type="primary">rpmF</name>
    <name type="ordered locus">VF_1744</name>
</gene>
<feature type="chain" id="PRO_0000225776" description="Large ribosomal subunit protein bL32">
    <location>
        <begin position="1"/>
        <end position="56"/>
    </location>
</feature>
<feature type="region of interest" description="Disordered" evidence="2">
    <location>
        <begin position="1"/>
        <end position="33"/>
    </location>
</feature>
<feature type="compositionally biased region" description="Basic residues" evidence="2">
    <location>
        <begin position="1"/>
        <end position="16"/>
    </location>
</feature>
<feature type="compositionally biased region" description="Polar residues" evidence="2">
    <location>
        <begin position="21"/>
        <end position="33"/>
    </location>
</feature>
<proteinExistence type="inferred from homology"/>
<evidence type="ECO:0000255" key="1">
    <source>
        <dbReference type="HAMAP-Rule" id="MF_00340"/>
    </source>
</evidence>
<evidence type="ECO:0000256" key="2">
    <source>
        <dbReference type="SAM" id="MobiDB-lite"/>
    </source>
</evidence>
<evidence type="ECO:0000305" key="3"/>